<keyword id="KW-0413">Isomerase</keyword>
<keyword id="KW-1185">Reference proteome</keyword>
<keyword id="KW-0819">tRNA processing</keyword>
<dbReference type="EC" id="5.4.99.12" evidence="1"/>
<dbReference type="EMBL" id="AM286690">
    <property type="protein sequence ID" value="CAL16911.1"/>
    <property type="molecule type" value="Genomic_DNA"/>
</dbReference>
<dbReference type="RefSeq" id="WP_011588744.1">
    <property type="nucleotide sequence ID" value="NC_008260.1"/>
</dbReference>
<dbReference type="SMR" id="Q0VPI7"/>
<dbReference type="STRING" id="393595.ABO_1463"/>
<dbReference type="KEGG" id="abo:ABO_1463"/>
<dbReference type="eggNOG" id="COG0101">
    <property type="taxonomic scope" value="Bacteria"/>
</dbReference>
<dbReference type="HOGENOM" id="CLU_014673_0_2_6"/>
<dbReference type="OrthoDB" id="9811823at2"/>
<dbReference type="Proteomes" id="UP000008871">
    <property type="component" value="Chromosome"/>
</dbReference>
<dbReference type="GO" id="GO:0003723">
    <property type="term" value="F:RNA binding"/>
    <property type="evidence" value="ECO:0007669"/>
    <property type="project" value="InterPro"/>
</dbReference>
<dbReference type="GO" id="GO:0160147">
    <property type="term" value="F:tRNA pseudouridine(38-40) synthase activity"/>
    <property type="evidence" value="ECO:0007669"/>
    <property type="project" value="UniProtKB-EC"/>
</dbReference>
<dbReference type="GO" id="GO:0031119">
    <property type="term" value="P:tRNA pseudouridine synthesis"/>
    <property type="evidence" value="ECO:0007669"/>
    <property type="project" value="UniProtKB-UniRule"/>
</dbReference>
<dbReference type="CDD" id="cd02570">
    <property type="entry name" value="PseudoU_synth_EcTruA"/>
    <property type="match status" value="1"/>
</dbReference>
<dbReference type="FunFam" id="3.30.70.580:FF:000001">
    <property type="entry name" value="tRNA pseudouridine synthase A"/>
    <property type="match status" value="1"/>
</dbReference>
<dbReference type="Gene3D" id="3.30.70.660">
    <property type="entry name" value="Pseudouridine synthase I, catalytic domain, C-terminal subdomain"/>
    <property type="match status" value="1"/>
</dbReference>
<dbReference type="Gene3D" id="3.30.70.580">
    <property type="entry name" value="Pseudouridine synthase I, catalytic domain, N-terminal subdomain"/>
    <property type="match status" value="1"/>
</dbReference>
<dbReference type="HAMAP" id="MF_00171">
    <property type="entry name" value="TruA"/>
    <property type="match status" value="1"/>
</dbReference>
<dbReference type="InterPro" id="IPR020103">
    <property type="entry name" value="PsdUridine_synth_cat_dom_sf"/>
</dbReference>
<dbReference type="InterPro" id="IPR001406">
    <property type="entry name" value="PsdUridine_synth_TruA"/>
</dbReference>
<dbReference type="InterPro" id="IPR020097">
    <property type="entry name" value="PsdUridine_synth_TruA_a/b_dom"/>
</dbReference>
<dbReference type="InterPro" id="IPR020095">
    <property type="entry name" value="PsdUridine_synth_TruA_C"/>
</dbReference>
<dbReference type="InterPro" id="IPR020094">
    <property type="entry name" value="TruA/RsuA/RluB/E/F_N"/>
</dbReference>
<dbReference type="NCBIfam" id="TIGR00071">
    <property type="entry name" value="hisT_truA"/>
    <property type="match status" value="1"/>
</dbReference>
<dbReference type="PANTHER" id="PTHR11142">
    <property type="entry name" value="PSEUDOURIDYLATE SYNTHASE"/>
    <property type="match status" value="1"/>
</dbReference>
<dbReference type="PANTHER" id="PTHR11142:SF0">
    <property type="entry name" value="TRNA PSEUDOURIDINE SYNTHASE-LIKE 1"/>
    <property type="match status" value="1"/>
</dbReference>
<dbReference type="Pfam" id="PF01416">
    <property type="entry name" value="PseudoU_synth_1"/>
    <property type="match status" value="2"/>
</dbReference>
<dbReference type="PIRSF" id="PIRSF001430">
    <property type="entry name" value="tRNA_psdUrid_synth"/>
    <property type="match status" value="1"/>
</dbReference>
<dbReference type="SUPFAM" id="SSF55120">
    <property type="entry name" value="Pseudouridine synthase"/>
    <property type="match status" value="1"/>
</dbReference>
<comment type="function">
    <text evidence="1">Formation of pseudouridine at positions 38, 39 and 40 in the anticodon stem and loop of transfer RNAs.</text>
</comment>
<comment type="catalytic activity">
    <reaction evidence="1">
        <text>uridine(38/39/40) in tRNA = pseudouridine(38/39/40) in tRNA</text>
        <dbReference type="Rhea" id="RHEA:22376"/>
        <dbReference type="Rhea" id="RHEA-COMP:10085"/>
        <dbReference type="Rhea" id="RHEA-COMP:10087"/>
        <dbReference type="ChEBI" id="CHEBI:65314"/>
        <dbReference type="ChEBI" id="CHEBI:65315"/>
        <dbReference type="EC" id="5.4.99.12"/>
    </reaction>
</comment>
<comment type="subunit">
    <text evidence="1">Homodimer.</text>
</comment>
<comment type="similarity">
    <text evidence="1">Belongs to the tRNA pseudouridine synthase TruA family.</text>
</comment>
<gene>
    <name evidence="1" type="primary">truA</name>
    <name type="ordered locus">ABO_1463</name>
</gene>
<reference key="1">
    <citation type="journal article" date="2006" name="Nat. Biotechnol.">
        <title>Genome sequence of the ubiquitous hydrocarbon-degrading marine bacterium Alcanivorax borkumensis.</title>
        <authorList>
            <person name="Schneiker S."/>
            <person name="Martins dos Santos V.A.P."/>
            <person name="Bartels D."/>
            <person name="Bekel T."/>
            <person name="Brecht M."/>
            <person name="Buhrmester J."/>
            <person name="Chernikova T.N."/>
            <person name="Denaro R."/>
            <person name="Ferrer M."/>
            <person name="Gertler C."/>
            <person name="Goesmann A."/>
            <person name="Golyshina O.V."/>
            <person name="Kaminski F."/>
            <person name="Khachane A.N."/>
            <person name="Lang S."/>
            <person name="Linke B."/>
            <person name="McHardy A.C."/>
            <person name="Meyer F."/>
            <person name="Nechitaylo T."/>
            <person name="Puehler A."/>
            <person name="Regenhardt D."/>
            <person name="Rupp O."/>
            <person name="Sabirova J.S."/>
            <person name="Selbitschka W."/>
            <person name="Yakimov M.M."/>
            <person name="Timmis K.N."/>
            <person name="Vorhoelter F.-J."/>
            <person name="Weidner S."/>
            <person name="Kaiser O."/>
            <person name="Golyshin P.N."/>
        </authorList>
    </citation>
    <scope>NUCLEOTIDE SEQUENCE [LARGE SCALE GENOMIC DNA]</scope>
    <source>
        <strain>ATCC 700651 / DSM 11573 / NCIMB 13689 / SK2</strain>
    </source>
</reference>
<organism>
    <name type="scientific">Alcanivorax borkumensis (strain ATCC 700651 / DSM 11573 / NCIMB 13689 / SK2)</name>
    <dbReference type="NCBI Taxonomy" id="393595"/>
    <lineage>
        <taxon>Bacteria</taxon>
        <taxon>Pseudomonadati</taxon>
        <taxon>Pseudomonadota</taxon>
        <taxon>Gammaproteobacteria</taxon>
        <taxon>Oceanospirillales</taxon>
        <taxon>Alcanivoracaceae</taxon>
        <taxon>Alcanivorax</taxon>
    </lineage>
</organism>
<name>TRUA_ALCBS</name>
<protein>
    <recommendedName>
        <fullName evidence="1">tRNA pseudouridine synthase A</fullName>
        <ecNumber evidence="1">5.4.99.12</ecNumber>
    </recommendedName>
    <alternativeName>
        <fullName evidence="1">tRNA pseudouridine(38-40) synthase</fullName>
    </alternativeName>
    <alternativeName>
        <fullName evidence="1">tRNA pseudouridylate synthase I</fullName>
    </alternativeName>
    <alternativeName>
        <fullName evidence="1">tRNA-uridine isomerase I</fullName>
    </alternativeName>
</protein>
<accession>Q0VPI7</accession>
<evidence type="ECO:0000255" key="1">
    <source>
        <dbReference type="HAMAP-Rule" id="MF_00171"/>
    </source>
</evidence>
<sequence>MTRIALGIEYDGTDFRGWQMQQSGVRTVQECLEAALSKVANHSVTVVCAGRTDAGVHGTGQVVHFDSDAPREMKSWIMGGNTNLPRDVTIRWAVPVSDDFHARFSAVSRRYRYVIYNHARPPALYRSQVTWNHRPLDVAAMREAASYLVGHHDFTAYRSVHCQAKSPLKTLHSLELYEQGKVLVLEAHANAFLMHMVRNIAGVLMKVGAGKKPPVWAKDVLECRDRRLGAATAPPFGLYLVEIEYPELFALPDEPLGPLWLPDRLEA</sequence>
<feature type="chain" id="PRO_1000194525" description="tRNA pseudouridine synthase A">
    <location>
        <begin position="1"/>
        <end position="267"/>
    </location>
</feature>
<feature type="active site" description="Nucleophile" evidence="1">
    <location>
        <position position="53"/>
    </location>
</feature>
<feature type="binding site" evidence="1">
    <location>
        <position position="111"/>
    </location>
    <ligand>
        <name>substrate</name>
    </ligand>
</feature>
<proteinExistence type="inferred from homology"/>